<gene>
    <name evidence="1" type="primary">hchA</name>
    <name type="ordered locus">BWG_1768</name>
</gene>
<name>HCHA_ECOBW</name>
<accession>C4ZQN7</accession>
<evidence type="ECO:0000255" key="1">
    <source>
        <dbReference type="HAMAP-Rule" id="MF_01046"/>
    </source>
</evidence>
<proteinExistence type="inferred from homology"/>
<feature type="chain" id="PRO_1000213421" description="Protein/nucleic acid deglycase HchA">
    <location>
        <begin position="1"/>
        <end position="283"/>
    </location>
</feature>
<feature type="active site" description="Nucleophile" evidence="1">
    <location>
        <position position="185"/>
    </location>
</feature>
<feature type="binding site" evidence="1">
    <location>
        <position position="86"/>
    </location>
    <ligand>
        <name>Zn(2+)</name>
        <dbReference type="ChEBI" id="CHEBI:29105"/>
    </ligand>
</feature>
<feature type="binding site" evidence="1">
    <location>
        <position position="91"/>
    </location>
    <ligand>
        <name>Zn(2+)</name>
        <dbReference type="ChEBI" id="CHEBI:29105"/>
    </ligand>
</feature>
<feature type="binding site" evidence="1">
    <location>
        <position position="123"/>
    </location>
    <ligand>
        <name>Zn(2+)</name>
        <dbReference type="ChEBI" id="CHEBI:29105"/>
    </ligand>
</feature>
<organism>
    <name type="scientific">Escherichia coli (strain K12 / MC4100 / BW2952)</name>
    <dbReference type="NCBI Taxonomy" id="595496"/>
    <lineage>
        <taxon>Bacteria</taxon>
        <taxon>Pseudomonadati</taxon>
        <taxon>Pseudomonadota</taxon>
        <taxon>Gammaproteobacteria</taxon>
        <taxon>Enterobacterales</taxon>
        <taxon>Enterobacteriaceae</taxon>
        <taxon>Escherichia</taxon>
    </lineage>
</organism>
<keyword id="KW-0963">Cytoplasm</keyword>
<keyword id="KW-0227">DNA damage</keyword>
<keyword id="KW-0234">DNA repair</keyword>
<keyword id="KW-0378">Hydrolase</keyword>
<keyword id="KW-0479">Metal-binding</keyword>
<keyword id="KW-0346">Stress response</keyword>
<keyword id="KW-0862">Zinc</keyword>
<protein>
    <recommendedName>
        <fullName evidence="1">Protein/nucleic acid deglycase HchA</fullName>
        <ecNumber evidence="1">3.1.2.-</ecNumber>
        <ecNumber evidence="1">3.5.1.-</ecNumber>
        <ecNumber evidence="1">3.5.1.124</ecNumber>
    </recommendedName>
    <alternativeName>
        <fullName evidence="1">Maillard deglycase</fullName>
    </alternativeName>
</protein>
<sequence length="283" mass="31190">MTVQTSKNPQVDIAEDNAFFPSEYSLSQYTSPVSDLDGVDYPKPYRGKHKILVIAADERYLPTDNGKLFSTGNHPIETLLPLYHLHAAGFEFEVATISGLMTKFEYWAMPHKDEKVMPFFEQHKSLFRNPKKLADVVASLNADSEYAAIFVPGGHGALIGLPESQDVAAALQWAIKNDRFVISLCHGPAAFLALRHGDNPLNGYSICAFPDAADKQTPEIGYMPGHLTWYFGEELKKMGMNIINDDITGRVHKDRKLLTGDSPFAANALGKLAAQEMLAAYAG</sequence>
<reference key="1">
    <citation type="journal article" date="2009" name="J. Bacteriol.">
        <title>Genomic sequencing reveals regulatory mutations and recombinational events in the widely used MC4100 lineage of Escherichia coli K-12.</title>
        <authorList>
            <person name="Ferenci T."/>
            <person name="Zhou Z."/>
            <person name="Betteridge T."/>
            <person name="Ren Y."/>
            <person name="Liu Y."/>
            <person name="Feng L."/>
            <person name="Reeves P.R."/>
            <person name="Wang L."/>
        </authorList>
    </citation>
    <scope>NUCLEOTIDE SEQUENCE [LARGE SCALE GENOMIC DNA]</scope>
    <source>
        <strain>K12 / MC4100 / BW2952</strain>
    </source>
</reference>
<comment type="function">
    <text evidence="1">Protein and nucleotide deglycase that catalyzes the deglycation of the Maillard adducts formed between amino groups of proteins or nucleotides and reactive carbonyl groups of glyoxals. Thus, functions as a protein deglycase that repairs methylglyoxal- and glyoxal-glycated proteins, and releases repaired proteins and lactate or glycolate, respectively. Deglycates cysteine, arginine and lysine residues in proteins, and thus reactivates these proteins by reversing glycation by glyoxals. Acts on early glycation intermediates (hemithioacetals and aminocarbinols), preventing the formation of Schiff bases and advanced glycation endproducts (AGE). Also functions as a nucleotide deglycase able to repair glycated guanine in the free nucleotide pool (GTP, GDP, GMP, dGTP) and in DNA and RNA. Is thus involved in a major nucleotide repair system named guanine glycation repair (GG repair), dedicated to reversing methylglyoxal and glyoxal damage via nucleotide sanitization and direct nucleic acid repair. Plays an important role in protecting cells from carbonyl stress.</text>
</comment>
<comment type="catalytic activity">
    <reaction evidence="1">
        <text>N(omega)-(1-hydroxy-2-oxopropyl)-L-arginyl-[protein] + H2O = lactate + L-arginyl-[protein] + H(+)</text>
        <dbReference type="Rhea" id="RHEA:49548"/>
        <dbReference type="Rhea" id="RHEA-COMP:10532"/>
        <dbReference type="Rhea" id="RHEA-COMP:12428"/>
        <dbReference type="ChEBI" id="CHEBI:15377"/>
        <dbReference type="ChEBI" id="CHEBI:15378"/>
        <dbReference type="ChEBI" id="CHEBI:24996"/>
        <dbReference type="ChEBI" id="CHEBI:29965"/>
        <dbReference type="ChEBI" id="CHEBI:131708"/>
        <dbReference type="EC" id="3.5.1.124"/>
    </reaction>
</comment>
<comment type="catalytic activity">
    <reaction evidence="1">
        <text>N(6)-(1-hydroxy-2-oxopropyl)-L-lysyl-[protein] + H2O = lactate + L-lysyl-[protein] + H(+)</text>
        <dbReference type="Rhea" id="RHEA:49552"/>
        <dbReference type="Rhea" id="RHEA-COMP:9752"/>
        <dbReference type="Rhea" id="RHEA-COMP:12429"/>
        <dbReference type="ChEBI" id="CHEBI:15377"/>
        <dbReference type="ChEBI" id="CHEBI:15378"/>
        <dbReference type="ChEBI" id="CHEBI:24996"/>
        <dbReference type="ChEBI" id="CHEBI:29969"/>
        <dbReference type="ChEBI" id="CHEBI:131709"/>
        <dbReference type="EC" id="3.5.1.124"/>
    </reaction>
</comment>
<comment type="catalytic activity">
    <reaction evidence="1">
        <text>S-(1-hydroxy-2-oxopropyl)-L-cysteinyl-[protein] + H2O = lactate + L-cysteinyl-[protein] + H(+)</text>
        <dbReference type="Rhea" id="RHEA:49556"/>
        <dbReference type="Rhea" id="RHEA-COMP:10131"/>
        <dbReference type="Rhea" id="RHEA-COMP:12430"/>
        <dbReference type="ChEBI" id="CHEBI:15377"/>
        <dbReference type="ChEBI" id="CHEBI:15378"/>
        <dbReference type="ChEBI" id="CHEBI:24996"/>
        <dbReference type="ChEBI" id="CHEBI:29950"/>
        <dbReference type="ChEBI" id="CHEBI:131710"/>
        <dbReference type="EC" id="3.5.1.124"/>
    </reaction>
</comment>
<comment type="catalytic activity">
    <reaction evidence="1">
        <text>N(omega)-(1-hydroxy-2-oxoethyl)-L-arginyl-[protein] + H2O = L-arginyl-[protein] + glycolate + H(+)</text>
        <dbReference type="Rhea" id="RHEA:57188"/>
        <dbReference type="Rhea" id="RHEA-COMP:10532"/>
        <dbReference type="Rhea" id="RHEA-COMP:14844"/>
        <dbReference type="ChEBI" id="CHEBI:15377"/>
        <dbReference type="ChEBI" id="CHEBI:15378"/>
        <dbReference type="ChEBI" id="CHEBI:29805"/>
        <dbReference type="ChEBI" id="CHEBI:29965"/>
        <dbReference type="ChEBI" id="CHEBI:141553"/>
        <dbReference type="EC" id="3.5.1.124"/>
    </reaction>
</comment>
<comment type="catalytic activity">
    <reaction evidence="1">
        <text>N(6)-(1-hydroxy-2-oxoethyl)-L-lysyl-[protein] + H2O = glycolate + L-lysyl-[protein] + H(+)</text>
        <dbReference type="Rhea" id="RHEA:57192"/>
        <dbReference type="Rhea" id="RHEA-COMP:9752"/>
        <dbReference type="Rhea" id="RHEA-COMP:14845"/>
        <dbReference type="ChEBI" id="CHEBI:15377"/>
        <dbReference type="ChEBI" id="CHEBI:15378"/>
        <dbReference type="ChEBI" id="CHEBI:29805"/>
        <dbReference type="ChEBI" id="CHEBI:29969"/>
        <dbReference type="ChEBI" id="CHEBI:141554"/>
        <dbReference type="EC" id="3.5.1.124"/>
    </reaction>
</comment>
<comment type="catalytic activity">
    <reaction evidence="1">
        <text>S-(1-hydroxy-2-oxoethyl)-L-cysteinyl-[protein] + H2O = glycolate + L-cysteinyl-[protein] + H(+)</text>
        <dbReference type="Rhea" id="RHEA:57196"/>
        <dbReference type="Rhea" id="RHEA-COMP:10131"/>
        <dbReference type="Rhea" id="RHEA-COMP:14846"/>
        <dbReference type="ChEBI" id="CHEBI:15377"/>
        <dbReference type="ChEBI" id="CHEBI:15378"/>
        <dbReference type="ChEBI" id="CHEBI:29805"/>
        <dbReference type="ChEBI" id="CHEBI:29950"/>
        <dbReference type="ChEBI" id="CHEBI:141555"/>
        <dbReference type="EC" id="3.5.1.124"/>
    </reaction>
</comment>
<comment type="catalytic activity">
    <reaction evidence="1">
        <text>N(2)-(1-hydroxy-2-oxopropyl)-dGTP + H2O = lactate + dGTP + H(+)</text>
        <dbReference type="Rhea" id="RHEA:57244"/>
        <dbReference type="ChEBI" id="CHEBI:15377"/>
        <dbReference type="ChEBI" id="CHEBI:15378"/>
        <dbReference type="ChEBI" id="CHEBI:24996"/>
        <dbReference type="ChEBI" id="CHEBI:61429"/>
        <dbReference type="ChEBI" id="CHEBI:141569"/>
    </reaction>
</comment>
<comment type="catalytic activity">
    <reaction evidence="1">
        <text>N(2)-(1-hydroxy-2-oxopropyl)-GTP + H2O = lactate + GTP + H(+)</text>
        <dbReference type="Rhea" id="RHEA:57256"/>
        <dbReference type="ChEBI" id="CHEBI:15377"/>
        <dbReference type="ChEBI" id="CHEBI:15378"/>
        <dbReference type="ChEBI" id="CHEBI:24996"/>
        <dbReference type="ChEBI" id="CHEBI:37565"/>
        <dbReference type="ChEBI" id="CHEBI:141570"/>
    </reaction>
</comment>
<comment type="catalytic activity">
    <reaction evidence="1">
        <text>N(2)-(1-hydroxy-2-oxopropyl)-GDP + H2O = lactate + GDP + H(+)</text>
        <dbReference type="Rhea" id="RHEA:57260"/>
        <dbReference type="ChEBI" id="CHEBI:15377"/>
        <dbReference type="ChEBI" id="CHEBI:15378"/>
        <dbReference type="ChEBI" id="CHEBI:24996"/>
        <dbReference type="ChEBI" id="CHEBI:58189"/>
        <dbReference type="ChEBI" id="CHEBI:141573"/>
    </reaction>
</comment>
<comment type="catalytic activity">
    <reaction evidence="1">
        <text>N(2)-(1-hydroxy-2-oxopropyl)-GMP + H2O = lactate + GMP + H(+)</text>
        <dbReference type="Rhea" id="RHEA:57268"/>
        <dbReference type="ChEBI" id="CHEBI:15377"/>
        <dbReference type="ChEBI" id="CHEBI:15378"/>
        <dbReference type="ChEBI" id="CHEBI:24996"/>
        <dbReference type="ChEBI" id="CHEBI:58115"/>
        <dbReference type="ChEBI" id="CHEBI:141575"/>
    </reaction>
</comment>
<comment type="catalytic activity">
    <reaction evidence="1">
        <text>N(2)-(1-hydroxy-2-oxoethyl)-dGTP + H2O = dGTP + glycolate + H(+)</text>
        <dbReference type="Rhea" id="RHEA:57248"/>
        <dbReference type="ChEBI" id="CHEBI:15377"/>
        <dbReference type="ChEBI" id="CHEBI:15378"/>
        <dbReference type="ChEBI" id="CHEBI:29805"/>
        <dbReference type="ChEBI" id="CHEBI:61429"/>
        <dbReference type="ChEBI" id="CHEBI:141572"/>
    </reaction>
</comment>
<comment type="catalytic activity">
    <reaction evidence="1">
        <text>N(2)-(1-hydroxy-2-oxoethyl)-GTP + H2O = glycolate + GTP + H(+)</text>
        <dbReference type="Rhea" id="RHEA:57252"/>
        <dbReference type="ChEBI" id="CHEBI:15377"/>
        <dbReference type="ChEBI" id="CHEBI:15378"/>
        <dbReference type="ChEBI" id="CHEBI:29805"/>
        <dbReference type="ChEBI" id="CHEBI:37565"/>
        <dbReference type="ChEBI" id="CHEBI:141571"/>
    </reaction>
</comment>
<comment type="catalytic activity">
    <reaction evidence="1">
        <text>N(2)-(1-hydroxy-2-oxoethyl)-GDP + H2O = glycolate + GDP + H(+)</text>
        <dbReference type="Rhea" id="RHEA:57264"/>
        <dbReference type="ChEBI" id="CHEBI:15377"/>
        <dbReference type="ChEBI" id="CHEBI:15378"/>
        <dbReference type="ChEBI" id="CHEBI:29805"/>
        <dbReference type="ChEBI" id="CHEBI:58189"/>
        <dbReference type="ChEBI" id="CHEBI:141574"/>
    </reaction>
</comment>
<comment type="catalytic activity">
    <reaction evidence="1">
        <text>N(2)-(1-hydroxy-2-oxoethyl)-GMP + H2O = glycolate + GMP + H(+)</text>
        <dbReference type="Rhea" id="RHEA:57304"/>
        <dbReference type="ChEBI" id="CHEBI:15377"/>
        <dbReference type="ChEBI" id="CHEBI:15378"/>
        <dbReference type="ChEBI" id="CHEBI:29805"/>
        <dbReference type="ChEBI" id="CHEBI:58115"/>
        <dbReference type="ChEBI" id="CHEBI:141576"/>
    </reaction>
</comment>
<comment type="catalytic activity">
    <reaction evidence="1">
        <text>an N(2)-(1-hydroxy-2-oxopropyl)-guanosine in RNA + H2O = a guanosine in RNA + lactate + H(+)</text>
        <dbReference type="Rhea" id="RHEA:57288"/>
        <dbReference type="Rhea" id="RHEA-COMP:14855"/>
        <dbReference type="Rhea" id="RHEA-COMP:14858"/>
        <dbReference type="ChEBI" id="CHEBI:15377"/>
        <dbReference type="ChEBI" id="CHEBI:15378"/>
        <dbReference type="ChEBI" id="CHEBI:24996"/>
        <dbReference type="ChEBI" id="CHEBI:74269"/>
        <dbReference type="ChEBI" id="CHEBI:141580"/>
    </reaction>
</comment>
<comment type="catalytic activity">
    <reaction evidence="1">
        <text>an N(2)-(1-hydroxy-2-oxopropyl)-2'-deoxyguanosine in DNA + H2O = a 2'-deoxyguanosine in DNA + lactate + H(+)</text>
        <dbReference type="Rhea" id="RHEA:57300"/>
        <dbReference type="Rhea" id="RHEA-COMP:11367"/>
        <dbReference type="Rhea" id="RHEA-COMP:14856"/>
        <dbReference type="ChEBI" id="CHEBI:15377"/>
        <dbReference type="ChEBI" id="CHEBI:15378"/>
        <dbReference type="ChEBI" id="CHEBI:24996"/>
        <dbReference type="ChEBI" id="CHEBI:85445"/>
        <dbReference type="ChEBI" id="CHEBI:141578"/>
    </reaction>
</comment>
<comment type="catalytic activity">
    <reaction evidence="1">
        <text>an N(2)-(1-hydroxy-2-oxoethyl)-guanosine in RNA + H2O = a guanosine in RNA + glycolate + H(+)</text>
        <dbReference type="Rhea" id="RHEA:57292"/>
        <dbReference type="Rhea" id="RHEA-COMP:14855"/>
        <dbReference type="Rhea" id="RHEA-COMP:14859"/>
        <dbReference type="ChEBI" id="CHEBI:15377"/>
        <dbReference type="ChEBI" id="CHEBI:15378"/>
        <dbReference type="ChEBI" id="CHEBI:29805"/>
        <dbReference type="ChEBI" id="CHEBI:74269"/>
        <dbReference type="ChEBI" id="CHEBI:141581"/>
    </reaction>
</comment>
<comment type="catalytic activity">
    <reaction evidence="1">
        <text>an N(2)-(1-hydroxy-2-oxoethyl)-2'-deoxyguanosine in DNA + H2O = a 2'-deoxyguanosine in DNA + glycolate + H(+)</text>
        <dbReference type="Rhea" id="RHEA:57296"/>
        <dbReference type="Rhea" id="RHEA-COMP:11367"/>
        <dbReference type="Rhea" id="RHEA-COMP:14857"/>
        <dbReference type="ChEBI" id="CHEBI:15377"/>
        <dbReference type="ChEBI" id="CHEBI:15378"/>
        <dbReference type="ChEBI" id="CHEBI:29805"/>
        <dbReference type="ChEBI" id="CHEBI:85445"/>
        <dbReference type="ChEBI" id="CHEBI:141579"/>
    </reaction>
</comment>
<comment type="subunit">
    <text evidence="1">Homodimer.</text>
</comment>
<comment type="subcellular location">
    <subcellularLocation>
        <location evidence="1">Cytoplasm</location>
    </subcellularLocation>
</comment>
<comment type="induction">
    <text evidence="1">By heat shock.</text>
</comment>
<comment type="similarity">
    <text evidence="1">Belongs to the peptidase C56 family. HchA subfamily.</text>
</comment>
<dbReference type="EC" id="3.1.2.-" evidence="1"/>
<dbReference type="EC" id="3.5.1.-" evidence="1"/>
<dbReference type="EC" id="3.5.1.124" evidence="1"/>
<dbReference type="EMBL" id="CP001396">
    <property type="protein sequence ID" value="ACR63433.1"/>
    <property type="molecule type" value="Genomic_DNA"/>
</dbReference>
<dbReference type="RefSeq" id="WP_000218212.1">
    <property type="nucleotide sequence ID" value="NC_012759.1"/>
</dbReference>
<dbReference type="SMR" id="C4ZQN7"/>
<dbReference type="MEROPS" id="C56.006"/>
<dbReference type="GeneID" id="86946880"/>
<dbReference type="KEGG" id="ebw:BWG_1768"/>
<dbReference type="HOGENOM" id="CLU_066933_0_0_6"/>
<dbReference type="GO" id="GO:0005737">
    <property type="term" value="C:cytoplasm"/>
    <property type="evidence" value="ECO:0007669"/>
    <property type="project" value="UniProtKB-SubCell"/>
</dbReference>
<dbReference type="GO" id="GO:0019172">
    <property type="term" value="F:glyoxalase III activity"/>
    <property type="evidence" value="ECO:0007669"/>
    <property type="project" value="TreeGrafter"/>
</dbReference>
<dbReference type="GO" id="GO:0036524">
    <property type="term" value="F:protein deglycase activity"/>
    <property type="evidence" value="ECO:0007669"/>
    <property type="project" value="UniProtKB-UniRule"/>
</dbReference>
<dbReference type="GO" id="GO:0016790">
    <property type="term" value="F:thiolester hydrolase activity"/>
    <property type="evidence" value="ECO:0007669"/>
    <property type="project" value="UniProtKB-UniRule"/>
</dbReference>
<dbReference type="GO" id="GO:0008270">
    <property type="term" value="F:zinc ion binding"/>
    <property type="evidence" value="ECO:0007669"/>
    <property type="project" value="UniProtKB-UniRule"/>
</dbReference>
<dbReference type="GO" id="GO:0006281">
    <property type="term" value="P:DNA repair"/>
    <property type="evidence" value="ECO:0007669"/>
    <property type="project" value="UniProtKB-UniRule"/>
</dbReference>
<dbReference type="GO" id="GO:0019243">
    <property type="term" value="P:methylglyoxal catabolic process to D-lactate via S-lactoyl-glutathione"/>
    <property type="evidence" value="ECO:0007669"/>
    <property type="project" value="TreeGrafter"/>
</dbReference>
<dbReference type="GO" id="GO:0030091">
    <property type="term" value="P:protein repair"/>
    <property type="evidence" value="ECO:0007669"/>
    <property type="project" value="UniProtKB-UniRule"/>
</dbReference>
<dbReference type="FunFam" id="3.40.50.880:FF:000026">
    <property type="entry name" value="Protein/nucleic acid deglycase HchA"/>
    <property type="match status" value="1"/>
</dbReference>
<dbReference type="Gene3D" id="3.40.50.880">
    <property type="match status" value="1"/>
</dbReference>
<dbReference type="HAMAP" id="MF_01046">
    <property type="entry name" value="Deglycase_HchA"/>
    <property type="match status" value="1"/>
</dbReference>
<dbReference type="InterPro" id="IPR029062">
    <property type="entry name" value="Class_I_gatase-like"/>
</dbReference>
<dbReference type="InterPro" id="IPR017283">
    <property type="entry name" value="HchA"/>
</dbReference>
<dbReference type="InterPro" id="IPR050325">
    <property type="entry name" value="Prot/Nucl_acid_deglycase"/>
</dbReference>
<dbReference type="NCBIfam" id="NF003168">
    <property type="entry name" value="PRK04155.1"/>
    <property type="match status" value="1"/>
</dbReference>
<dbReference type="PANTHER" id="PTHR48094">
    <property type="entry name" value="PROTEIN/NUCLEIC ACID DEGLYCASE DJ-1-RELATED"/>
    <property type="match status" value="1"/>
</dbReference>
<dbReference type="PANTHER" id="PTHR48094:SF20">
    <property type="entry name" value="PROTEIN_NUCLEIC ACID DEGLYCASE 1"/>
    <property type="match status" value="1"/>
</dbReference>
<dbReference type="PIRSF" id="PIRSF037798">
    <property type="entry name" value="Chaperone_HchA"/>
    <property type="match status" value="1"/>
</dbReference>
<dbReference type="SUPFAM" id="SSF52317">
    <property type="entry name" value="Class I glutamine amidotransferase-like"/>
    <property type="match status" value="1"/>
</dbReference>